<protein>
    <recommendedName>
        <fullName evidence="1">Small ribosomal subunit protein uS4</fullName>
    </recommendedName>
    <alternativeName>
        <fullName evidence="3">30S ribosomal protein S4</fullName>
    </alternativeName>
</protein>
<reference key="1">
    <citation type="journal article" date="2010" name="PLoS ONE">
        <title>The complete multipartite genome sequence of Cupriavidus necator JMP134, a versatile pollutant degrader.</title>
        <authorList>
            <person name="Lykidis A."/>
            <person name="Perez-Pantoja D."/>
            <person name="Ledger T."/>
            <person name="Mavromatis K."/>
            <person name="Anderson I.J."/>
            <person name="Ivanova N.N."/>
            <person name="Hooper S.D."/>
            <person name="Lapidus A."/>
            <person name="Lucas S."/>
            <person name="Gonzalez B."/>
            <person name="Kyrpides N.C."/>
        </authorList>
    </citation>
    <scope>NUCLEOTIDE SEQUENCE [LARGE SCALE GENOMIC DNA]</scope>
    <source>
        <strain>JMP134 / LMG 1197</strain>
    </source>
</reference>
<keyword id="KW-0687">Ribonucleoprotein</keyword>
<keyword id="KW-0689">Ribosomal protein</keyword>
<keyword id="KW-0694">RNA-binding</keyword>
<keyword id="KW-0699">rRNA-binding</keyword>
<dbReference type="EMBL" id="CP000090">
    <property type="protein sequence ID" value="AAZ62515.1"/>
    <property type="molecule type" value="Genomic_DNA"/>
</dbReference>
<dbReference type="SMR" id="Q46WG8"/>
<dbReference type="STRING" id="264198.Reut_A3155"/>
<dbReference type="KEGG" id="reu:Reut_A3155"/>
<dbReference type="eggNOG" id="COG0522">
    <property type="taxonomic scope" value="Bacteria"/>
</dbReference>
<dbReference type="HOGENOM" id="CLU_092403_0_2_4"/>
<dbReference type="OrthoDB" id="9803672at2"/>
<dbReference type="GO" id="GO:0015935">
    <property type="term" value="C:small ribosomal subunit"/>
    <property type="evidence" value="ECO:0007669"/>
    <property type="project" value="InterPro"/>
</dbReference>
<dbReference type="GO" id="GO:0019843">
    <property type="term" value="F:rRNA binding"/>
    <property type="evidence" value="ECO:0007669"/>
    <property type="project" value="UniProtKB-UniRule"/>
</dbReference>
<dbReference type="GO" id="GO:0003735">
    <property type="term" value="F:structural constituent of ribosome"/>
    <property type="evidence" value="ECO:0007669"/>
    <property type="project" value="InterPro"/>
</dbReference>
<dbReference type="GO" id="GO:0042274">
    <property type="term" value="P:ribosomal small subunit biogenesis"/>
    <property type="evidence" value="ECO:0007669"/>
    <property type="project" value="TreeGrafter"/>
</dbReference>
<dbReference type="GO" id="GO:0006412">
    <property type="term" value="P:translation"/>
    <property type="evidence" value="ECO:0007669"/>
    <property type="project" value="UniProtKB-UniRule"/>
</dbReference>
<dbReference type="CDD" id="cd00165">
    <property type="entry name" value="S4"/>
    <property type="match status" value="1"/>
</dbReference>
<dbReference type="FunFam" id="1.10.1050.10:FF:000001">
    <property type="entry name" value="30S ribosomal protein S4"/>
    <property type="match status" value="1"/>
</dbReference>
<dbReference type="FunFam" id="3.10.290.10:FF:000001">
    <property type="entry name" value="30S ribosomal protein S4"/>
    <property type="match status" value="1"/>
</dbReference>
<dbReference type="Gene3D" id="1.10.1050.10">
    <property type="entry name" value="Ribosomal Protein S4 Delta 41, Chain A, domain 1"/>
    <property type="match status" value="1"/>
</dbReference>
<dbReference type="Gene3D" id="3.10.290.10">
    <property type="entry name" value="RNA-binding S4 domain"/>
    <property type="match status" value="1"/>
</dbReference>
<dbReference type="HAMAP" id="MF_01306_B">
    <property type="entry name" value="Ribosomal_uS4_B"/>
    <property type="match status" value="1"/>
</dbReference>
<dbReference type="InterPro" id="IPR022801">
    <property type="entry name" value="Ribosomal_uS4"/>
</dbReference>
<dbReference type="InterPro" id="IPR005709">
    <property type="entry name" value="Ribosomal_uS4_bac-type"/>
</dbReference>
<dbReference type="InterPro" id="IPR018079">
    <property type="entry name" value="Ribosomal_uS4_CS"/>
</dbReference>
<dbReference type="InterPro" id="IPR001912">
    <property type="entry name" value="Ribosomal_uS4_N"/>
</dbReference>
<dbReference type="InterPro" id="IPR002942">
    <property type="entry name" value="S4_RNA-bd"/>
</dbReference>
<dbReference type="InterPro" id="IPR036986">
    <property type="entry name" value="S4_RNA-bd_sf"/>
</dbReference>
<dbReference type="NCBIfam" id="NF003717">
    <property type="entry name" value="PRK05327.1"/>
    <property type="match status" value="1"/>
</dbReference>
<dbReference type="NCBIfam" id="TIGR01017">
    <property type="entry name" value="rpsD_bact"/>
    <property type="match status" value="1"/>
</dbReference>
<dbReference type="PANTHER" id="PTHR11831">
    <property type="entry name" value="30S 40S RIBOSOMAL PROTEIN"/>
    <property type="match status" value="1"/>
</dbReference>
<dbReference type="PANTHER" id="PTHR11831:SF4">
    <property type="entry name" value="SMALL RIBOSOMAL SUBUNIT PROTEIN US4M"/>
    <property type="match status" value="1"/>
</dbReference>
<dbReference type="Pfam" id="PF00163">
    <property type="entry name" value="Ribosomal_S4"/>
    <property type="match status" value="1"/>
</dbReference>
<dbReference type="Pfam" id="PF01479">
    <property type="entry name" value="S4"/>
    <property type="match status" value="1"/>
</dbReference>
<dbReference type="SMART" id="SM01390">
    <property type="entry name" value="Ribosomal_S4"/>
    <property type="match status" value="1"/>
</dbReference>
<dbReference type="SMART" id="SM00363">
    <property type="entry name" value="S4"/>
    <property type="match status" value="1"/>
</dbReference>
<dbReference type="SUPFAM" id="SSF55174">
    <property type="entry name" value="Alpha-L RNA-binding motif"/>
    <property type="match status" value="1"/>
</dbReference>
<dbReference type="PROSITE" id="PS00632">
    <property type="entry name" value="RIBOSOMAL_S4"/>
    <property type="match status" value="1"/>
</dbReference>
<dbReference type="PROSITE" id="PS50889">
    <property type="entry name" value="S4"/>
    <property type="match status" value="1"/>
</dbReference>
<proteinExistence type="inferred from homology"/>
<gene>
    <name evidence="1" type="primary">rpsD</name>
    <name type="ordered locus">Reut_A3155</name>
</gene>
<name>RS4_CUPPJ</name>
<sequence>MARYTGPKAKLSRREGTDLFLKSARRSLADKCKLDSKPGQHGRTSGARTSDYGNQLREKQKVKRIYGVLERQFRRYFAEADRRKGNTGEKLLQLLESRLDNVVYRMGFGSTRAEARQLVSHKAILVNGQTLNVPSAQIKSGDVITIREQSKKQVRIAEALSLAEQSGFPTWVAVDAKKFEGTFKQVPDRADISGDINESLIVELYSR</sequence>
<organism>
    <name type="scientific">Cupriavidus pinatubonensis (strain JMP 134 / LMG 1197)</name>
    <name type="common">Cupriavidus necator (strain JMP 134)</name>
    <dbReference type="NCBI Taxonomy" id="264198"/>
    <lineage>
        <taxon>Bacteria</taxon>
        <taxon>Pseudomonadati</taxon>
        <taxon>Pseudomonadota</taxon>
        <taxon>Betaproteobacteria</taxon>
        <taxon>Burkholderiales</taxon>
        <taxon>Burkholderiaceae</taxon>
        <taxon>Cupriavidus</taxon>
    </lineage>
</organism>
<accession>Q46WG8</accession>
<feature type="chain" id="PRO_0000228919" description="Small ribosomal subunit protein uS4">
    <location>
        <begin position="1"/>
        <end position="207"/>
    </location>
</feature>
<feature type="domain" description="S4 RNA-binding" evidence="1">
    <location>
        <begin position="97"/>
        <end position="160"/>
    </location>
</feature>
<feature type="region of interest" description="Disordered" evidence="2">
    <location>
        <begin position="33"/>
        <end position="54"/>
    </location>
</feature>
<feature type="compositionally biased region" description="Polar residues" evidence="2">
    <location>
        <begin position="42"/>
        <end position="53"/>
    </location>
</feature>
<evidence type="ECO:0000255" key="1">
    <source>
        <dbReference type="HAMAP-Rule" id="MF_01306"/>
    </source>
</evidence>
<evidence type="ECO:0000256" key="2">
    <source>
        <dbReference type="SAM" id="MobiDB-lite"/>
    </source>
</evidence>
<evidence type="ECO:0000305" key="3"/>
<comment type="function">
    <text evidence="1">One of the primary rRNA binding proteins, it binds directly to 16S rRNA where it nucleates assembly of the body of the 30S subunit.</text>
</comment>
<comment type="function">
    <text evidence="1">With S5 and S12 plays an important role in translational accuracy.</text>
</comment>
<comment type="subunit">
    <text evidence="1">Part of the 30S ribosomal subunit. Contacts protein S5. The interaction surface between S4 and S5 is involved in control of translational fidelity.</text>
</comment>
<comment type="similarity">
    <text evidence="1">Belongs to the universal ribosomal protein uS4 family.</text>
</comment>